<reference key="1">
    <citation type="journal article" date="2004" name="Biochem. Biophys. Res. Commun.">
        <title>Cloning and enzymatic analysis of 22 novel human ubiquitin-specific proteases.</title>
        <authorList>
            <person name="Quesada V."/>
            <person name="Diaz-Perales A."/>
            <person name="Gutierrez-Fernandez A."/>
            <person name="Garabaya C."/>
            <person name="Cal S."/>
            <person name="Lopez-Otin C."/>
        </authorList>
    </citation>
    <scope>NUCLEOTIDE SEQUENCE [MRNA] (ISOFORM 1)</scope>
    <scope>TISSUE SPECIFICITY</scope>
</reference>
<reference key="2">
    <citation type="journal article" date="2004" name="Nat. Genet.">
        <title>Complete sequencing and characterization of 21,243 full-length human cDNAs.</title>
        <authorList>
            <person name="Ota T."/>
            <person name="Suzuki Y."/>
            <person name="Nishikawa T."/>
            <person name="Otsuki T."/>
            <person name="Sugiyama T."/>
            <person name="Irie R."/>
            <person name="Wakamatsu A."/>
            <person name="Hayashi K."/>
            <person name="Sato H."/>
            <person name="Nagai K."/>
            <person name="Kimura K."/>
            <person name="Makita H."/>
            <person name="Sekine M."/>
            <person name="Obayashi M."/>
            <person name="Nishi T."/>
            <person name="Shibahara T."/>
            <person name="Tanaka T."/>
            <person name="Ishii S."/>
            <person name="Yamamoto J."/>
            <person name="Saito K."/>
            <person name="Kawai Y."/>
            <person name="Isono Y."/>
            <person name="Nakamura Y."/>
            <person name="Nagahari K."/>
            <person name="Murakami K."/>
            <person name="Yasuda T."/>
            <person name="Iwayanagi T."/>
            <person name="Wagatsuma M."/>
            <person name="Shiratori A."/>
            <person name="Sudo H."/>
            <person name="Hosoiri T."/>
            <person name="Kaku Y."/>
            <person name="Kodaira H."/>
            <person name="Kondo H."/>
            <person name="Sugawara M."/>
            <person name="Takahashi M."/>
            <person name="Kanda K."/>
            <person name="Yokoi T."/>
            <person name="Furuya T."/>
            <person name="Kikkawa E."/>
            <person name="Omura Y."/>
            <person name="Abe K."/>
            <person name="Kamihara K."/>
            <person name="Katsuta N."/>
            <person name="Sato K."/>
            <person name="Tanikawa M."/>
            <person name="Yamazaki M."/>
            <person name="Ninomiya K."/>
            <person name="Ishibashi T."/>
            <person name="Yamashita H."/>
            <person name="Murakawa K."/>
            <person name="Fujimori K."/>
            <person name="Tanai H."/>
            <person name="Kimata M."/>
            <person name="Watanabe M."/>
            <person name="Hiraoka S."/>
            <person name="Chiba Y."/>
            <person name="Ishida S."/>
            <person name="Ono Y."/>
            <person name="Takiguchi S."/>
            <person name="Watanabe S."/>
            <person name="Yosida M."/>
            <person name="Hotuta T."/>
            <person name="Kusano J."/>
            <person name="Kanehori K."/>
            <person name="Takahashi-Fujii A."/>
            <person name="Hara H."/>
            <person name="Tanase T.-O."/>
            <person name="Nomura Y."/>
            <person name="Togiya S."/>
            <person name="Komai F."/>
            <person name="Hara R."/>
            <person name="Takeuchi K."/>
            <person name="Arita M."/>
            <person name="Imose N."/>
            <person name="Musashino K."/>
            <person name="Yuuki H."/>
            <person name="Oshima A."/>
            <person name="Sasaki N."/>
            <person name="Aotsuka S."/>
            <person name="Yoshikawa Y."/>
            <person name="Matsunawa H."/>
            <person name="Ichihara T."/>
            <person name="Shiohata N."/>
            <person name="Sano S."/>
            <person name="Moriya S."/>
            <person name="Momiyama H."/>
            <person name="Satoh N."/>
            <person name="Takami S."/>
            <person name="Terashima Y."/>
            <person name="Suzuki O."/>
            <person name="Nakagawa S."/>
            <person name="Senoh A."/>
            <person name="Mizoguchi H."/>
            <person name="Goto Y."/>
            <person name="Shimizu F."/>
            <person name="Wakebe H."/>
            <person name="Hishigaki H."/>
            <person name="Watanabe T."/>
            <person name="Sugiyama A."/>
            <person name="Takemoto M."/>
            <person name="Kawakami B."/>
            <person name="Yamazaki M."/>
            <person name="Watanabe K."/>
            <person name="Kumagai A."/>
            <person name="Itakura S."/>
            <person name="Fukuzumi Y."/>
            <person name="Fujimori Y."/>
            <person name="Komiyama M."/>
            <person name="Tashiro H."/>
            <person name="Tanigami A."/>
            <person name="Fujiwara T."/>
            <person name="Ono T."/>
            <person name="Yamada K."/>
            <person name="Fujii Y."/>
            <person name="Ozaki K."/>
            <person name="Hirao M."/>
            <person name="Ohmori Y."/>
            <person name="Kawabata A."/>
            <person name="Hikiji T."/>
            <person name="Kobatake N."/>
            <person name="Inagaki H."/>
            <person name="Ikema Y."/>
            <person name="Okamoto S."/>
            <person name="Okitani R."/>
            <person name="Kawakami T."/>
            <person name="Noguchi S."/>
            <person name="Itoh T."/>
            <person name="Shigeta K."/>
            <person name="Senba T."/>
            <person name="Matsumura K."/>
            <person name="Nakajima Y."/>
            <person name="Mizuno T."/>
            <person name="Morinaga M."/>
            <person name="Sasaki M."/>
            <person name="Togashi T."/>
            <person name="Oyama M."/>
            <person name="Hata H."/>
            <person name="Watanabe M."/>
            <person name="Komatsu T."/>
            <person name="Mizushima-Sugano J."/>
            <person name="Satoh T."/>
            <person name="Shirai Y."/>
            <person name="Takahashi Y."/>
            <person name="Nakagawa K."/>
            <person name="Okumura K."/>
            <person name="Nagase T."/>
            <person name="Nomura N."/>
            <person name="Kikuchi H."/>
            <person name="Masuho Y."/>
            <person name="Yamashita R."/>
            <person name="Nakai K."/>
            <person name="Yada T."/>
            <person name="Nakamura Y."/>
            <person name="Ohara O."/>
            <person name="Isogai T."/>
            <person name="Sugano S."/>
        </authorList>
    </citation>
    <scope>NUCLEOTIDE SEQUENCE [LARGE SCALE MRNA] (ISOFORM 2)</scope>
    <scope>NUCLEOTIDE SEQUENCE [LARGE SCALE MRNA] OF 110-1352 (ISOFORM 1)</scope>
    <scope>VARIANT THR-538</scope>
    <source>
        <tissue>Cerebellum</tissue>
        <tissue>Uterus</tissue>
    </source>
</reference>
<reference key="3">
    <citation type="journal article" date="1999" name="DNA Res.">
        <title>Prediction of the coding sequences of unidentified human genes. XV. The complete sequences of 100 new cDNA clones from brain which code for large proteins in vitro.</title>
        <authorList>
            <person name="Nagase T."/>
            <person name="Ishikawa K."/>
            <person name="Kikuno R."/>
            <person name="Hirosawa M."/>
            <person name="Nomura N."/>
            <person name="Ohara O."/>
        </authorList>
    </citation>
    <scope>NUCLEOTIDE SEQUENCE [LARGE SCALE MRNA] OF 626-1352 (ISOFORM 1)</scope>
    <source>
        <tissue>Brain</tissue>
    </source>
</reference>
<reference key="4">
    <citation type="journal article" date="2007" name="BMC Genomics">
        <title>The full-ORF clone resource of the German cDNA consortium.</title>
        <authorList>
            <person name="Bechtel S."/>
            <person name="Rosenfelder H."/>
            <person name="Duda A."/>
            <person name="Schmidt C.P."/>
            <person name="Ernst U."/>
            <person name="Wellenreuther R."/>
            <person name="Mehrle A."/>
            <person name="Schuster C."/>
            <person name="Bahr A."/>
            <person name="Bloecker H."/>
            <person name="Heubner D."/>
            <person name="Hoerlein A."/>
            <person name="Michel G."/>
            <person name="Wedler H."/>
            <person name="Koehrer K."/>
            <person name="Ottenwaelder B."/>
            <person name="Poustka A."/>
            <person name="Wiemann S."/>
            <person name="Schupp I."/>
        </authorList>
    </citation>
    <scope>NUCLEOTIDE SEQUENCE [LARGE SCALE MRNA] OF 539-709 (ISOFORM 1)</scope>
    <source>
        <tissue>Uterine endothelium</tissue>
    </source>
</reference>
<reference key="5">
    <citation type="journal article" date="2021" name="Acta Biochim. Biophys. Sin.">
        <title>USP31 acetylation at Lys1264 is essential for its activity and cervical cancer cell growth.</title>
        <authorList>
            <person name="Hou Y."/>
            <person name="Fan Y."/>
            <person name="Xia X."/>
            <person name="Pan J."/>
            <person name="Hou J."/>
            <person name="Liu X."/>
            <person name="Chen X."/>
        </authorList>
    </citation>
    <scope>FUNCTION</scope>
    <scope>ACETYLATION AT LYS-1264</scope>
    <scope>MUTAGENESIS OF LYS-1264</scope>
    <scope>CATALYTIC ACTIVITY</scope>
</reference>
<reference key="6">
    <citation type="journal article" date="2022" name="Sci. Rep.">
        <title>Characterization of host factors associated with the internal ribosomal entry sites of foot-and-mouth disease and classical swine fever viruses.</title>
        <authorList>
            <person name="Ide Y."/>
            <person name="Kitab B."/>
            <person name="Ito N."/>
            <person name="Okamoto R."/>
            <person name="Tamura Y."/>
            <person name="Matsui T."/>
            <person name="Sakoda Y."/>
            <person name="Tsukiyama-Kohara K."/>
        </authorList>
    </citation>
    <scope>FUNCTION (MICROBIAL INFECTION)</scope>
</reference>
<sequence>MSKVTAPGSGPPAAASGKEKRSFSKRLFRSGRAGGGGAGGPGASGPAAPSSPSSPSSARSVGSFMSRVLKTLSTLSHLSSEGAAPDRGGLRSCFPPGPAAAPTPPPCPPPPASPAPPACAAEPVPGVAGLRNHGNTCFMNATLQCLSNTELFAEYLALGQYRAGRPEPSPDPEQPAGRGAQGQGEVTEQLAHLVRALWTLEYTPQHSRDFKTIVSKNALQYRGNSQHDAQEFLLWLLDRVHEDLNHSVKQSGQPPLKPPSETDMMPEGPSFPVCSTFVQELFQAQYRSSLTCPHCQKQSNTFDPFLCISLPIPLPHTRPLYVTVVYQGKCSHCMRIGVAVPLSGTVARLREAVSMETKIPTDQIVLTEMYYDGFHRSFCDTDDLETVHESDCIFAFETPEIFRPEGILSQRGIHLNNNLNHLKFGLDYHRLSSPTQTAAKQGKMDSPTSRAGSDKIVLLVCNRACTGQQGKRFGLPFVLHLEKTIAWDLLQKEILEKMKYFLRPTVCIQVCPFSLRVVSVVGITYLLPQEEQPLCHPIVERALKSCGPGGTAHVKLVVEWDKETRDFLFVNTEDEYIPDAESVRLQRERHHQPQTCTLSQCFQLYTKEERLAPDDAWRCPHCKQLQQGSITLSLWTLPDVLIIHLKRFRQEGDRRMKLQNMVKFPLTGLDMTPHVVKRSQSSWSLPSHWSPWRRPYGLGRDPEDYIYDLYAVCNHHGTMQGGHYTAYCKNSVDGLWYCFDDSDVQQLSEDEVCTQTAYILFYQRRTAIPSWSANSSVAGSTSSSLCEHWVSRLPGSKPASVTSAASSRRTSLASLSESVEMTGERSEDDGGFSTRPFVRSVQRQSLSSRSSVTSPLAVNENCMRPSWSLSAKLQMRSNSPSRFSGDSPIHSSASTLEKIGEAADDKVSISCFGSLRNLSSSYQEPSDSHSRREHKAVGRAPLAVMEGVFKDESDTRRLNSSVVDTQSKHSAQGDRLPPLSGPFDNNNQIAYVDQSDSVDSSPVKEVKAPSHPGSLAKKPESTTKRSPSSKGTSEPEKSLRKGRPALASQESSLSSTSPSSPLPVKVSLKPSRSRSKADSSSRGSGRHSSPAPAQPKKESSPKSQDSVSSPSPQKQKSASALTYTASSTSAKKASGPATRSPFPPGKSRTSDHSLSREGSRQSLGSDRASATSTSKPNSPRVSQARAGEGRGAGKHVRSSSMASLRSPSTSIKSGLKRDSKSEDKGLSFFKSALRQKETRRSTDLGKTALLSKKAGGSSVKSVCKNTGDDEAERGHQPPASQQPNANTTGKEQLVTKDPASAKHSLLSARKSKSSQLDSGVPSSPGGRQSAEKSSKKLSSSMQTSARPSQKPQ</sequence>
<accession>Q70CQ4</accession>
<accession>Q6AW97</accession>
<accession>Q6ZTC0</accession>
<accession>Q6ZTN2</accession>
<accession>Q9ULL7</accession>
<protein>
    <recommendedName>
        <fullName>Ubiquitin carboxyl-terminal hydrolase 31</fullName>
        <ecNumber evidence="6">3.4.19.12</ecNumber>
    </recommendedName>
    <alternativeName>
        <fullName>Deubiquitinating enzyme 31</fullName>
    </alternativeName>
    <alternativeName>
        <fullName>Ubiquitin thioesterase 31</fullName>
    </alternativeName>
    <alternativeName>
        <fullName>Ubiquitin-specific-processing protease 31</fullName>
    </alternativeName>
</protein>
<organism>
    <name type="scientific">Homo sapiens</name>
    <name type="common">Human</name>
    <dbReference type="NCBI Taxonomy" id="9606"/>
    <lineage>
        <taxon>Eukaryota</taxon>
        <taxon>Metazoa</taxon>
        <taxon>Chordata</taxon>
        <taxon>Craniata</taxon>
        <taxon>Vertebrata</taxon>
        <taxon>Euteleostomi</taxon>
        <taxon>Mammalia</taxon>
        <taxon>Eutheria</taxon>
        <taxon>Euarchontoglires</taxon>
        <taxon>Primates</taxon>
        <taxon>Haplorrhini</taxon>
        <taxon>Catarrhini</taxon>
        <taxon>Hominidae</taxon>
        <taxon>Homo</taxon>
    </lineage>
</organism>
<keyword id="KW-0007">Acetylation</keyword>
<keyword id="KW-0025">Alternative splicing</keyword>
<keyword id="KW-0378">Hydrolase</keyword>
<keyword id="KW-0645">Protease</keyword>
<keyword id="KW-1267">Proteomics identification</keyword>
<keyword id="KW-1185">Reference proteome</keyword>
<keyword id="KW-0788">Thiol protease</keyword>
<keyword id="KW-0833">Ubl conjugation pathway</keyword>
<evidence type="ECO:0000255" key="1">
    <source>
        <dbReference type="PROSITE-ProRule" id="PRU10092"/>
    </source>
</evidence>
<evidence type="ECO:0000255" key="2">
    <source>
        <dbReference type="PROSITE-ProRule" id="PRU10093"/>
    </source>
</evidence>
<evidence type="ECO:0000256" key="3">
    <source>
        <dbReference type="SAM" id="MobiDB-lite"/>
    </source>
</evidence>
<evidence type="ECO:0000269" key="4">
    <source>
    </source>
</evidence>
<evidence type="ECO:0000269" key="5">
    <source>
    </source>
</evidence>
<evidence type="ECO:0000269" key="6">
    <source>
    </source>
</evidence>
<evidence type="ECO:0000269" key="7">
    <source>
    </source>
</evidence>
<evidence type="ECO:0000303" key="8">
    <source>
    </source>
</evidence>
<evidence type="ECO:0000305" key="9"/>
<name>UBP31_HUMAN</name>
<proteinExistence type="evidence at protein level"/>
<feature type="chain" id="PRO_0000249518" description="Ubiquitin carboxyl-terminal hydrolase 31">
    <location>
        <begin position="1"/>
        <end position="1352"/>
    </location>
</feature>
<feature type="domain" description="USP">
    <location>
        <begin position="128"/>
        <end position="765"/>
    </location>
</feature>
<feature type="region of interest" description="Disordered" evidence="3">
    <location>
        <begin position="1"/>
        <end position="62"/>
    </location>
</feature>
<feature type="region of interest" description="Disordered" evidence="3">
    <location>
        <begin position="79"/>
        <end position="119"/>
    </location>
</feature>
<feature type="region of interest" description="Disordered" evidence="3">
    <location>
        <begin position="162"/>
        <end position="185"/>
    </location>
</feature>
<feature type="region of interest" description="Disordered" evidence="3">
    <location>
        <begin position="812"/>
        <end position="835"/>
    </location>
</feature>
<feature type="region of interest" description="Disordered" evidence="3">
    <location>
        <begin position="919"/>
        <end position="939"/>
    </location>
</feature>
<feature type="region of interest" description="Disordered" evidence="3">
    <location>
        <begin position="951"/>
        <end position="1352"/>
    </location>
</feature>
<feature type="compositionally biased region" description="Low complexity" evidence="3">
    <location>
        <begin position="1"/>
        <end position="16"/>
    </location>
</feature>
<feature type="compositionally biased region" description="Gly residues" evidence="3">
    <location>
        <begin position="32"/>
        <end position="43"/>
    </location>
</feature>
<feature type="compositionally biased region" description="Low complexity" evidence="3">
    <location>
        <begin position="44"/>
        <end position="62"/>
    </location>
</feature>
<feature type="compositionally biased region" description="Pro residues" evidence="3">
    <location>
        <begin position="95"/>
        <end position="117"/>
    </location>
</feature>
<feature type="compositionally biased region" description="Polar residues" evidence="3">
    <location>
        <begin position="958"/>
        <end position="970"/>
    </location>
</feature>
<feature type="compositionally biased region" description="Low complexity" evidence="3">
    <location>
        <begin position="992"/>
        <end position="1001"/>
    </location>
</feature>
<feature type="compositionally biased region" description="Low complexity" evidence="3">
    <location>
        <begin position="1051"/>
        <end position="1070"/>
    </location>
</feature>
<feature type="compositionally biased region" description="Low complexity" evidence="3">
    <location>
        <begin position="1078"/>
        <end position="1089"/>
    </location>
</feature>
<feature type="compositionally biased region" description="Low complexity" evidence="3">
    <location>
        <begin position="1101"/>
        <end position="1138"/>
    </location>
</feature>
<feature type="compositionally biased region" description="Basic and acidic residues" evidence="3">
    <location>
        <begin position="1148"/>
        <end position="1159"/>
    </location>
</feature>
<feature type="compositionally biased region" description="Polar residues" evidence="3">
    <location>
        <begin position="1160"/>
        <end position="1181"/>
    </location>
</feature>
<feature type="compositionally biased region" description="Low complexity" evidence="3">
    <location>
        <begin position="1198"/>
        <end position="1210"/>
    </location>
</feature>
<feature type="compositionally biased region" description="Basic and acidic residues" evidence="3">
    <location>
        <begin position="1215"/>
        <end position="1225"/>
    </location>
</feature>
<feature type="compositionally biased region" description="Basic and acidic residues" evidence="3">
    <location>
        <begin position="1234"/>
        <end position="1243"/>
    </location>
</feature>
<feature type="compositionally biased region" description="Low complexity" evidence="3">
    <location>
        <begin position="1251"/>
        <end position="1264"/>
    </location>
</feature>
<feature type="compositionally biased region" description="Polar residues" evidence="3">
    <location>
        <begin position="1278"/>
        <end position="1290"/>
    </location>
</feature>
<feature type="compositionally biased region" description="Polar residues" evidence="3">
    <location>
        <begin position="1341"/>
        <end position="1352"/>
    </location>
</feature>
<feature type="active site" description="Nucleophile" evidence="1 2">
    <location>
        <position position="137"/>
    </location>
</feature>
<feature type="active site" description="Proton acceptor" evidence="1 2">
    <location>
        <position position="723"/>
    </location>
</feature>
<feature type="modified residue" description="N6-acetyllysine" evidence="6">
    <location>
        <position position="1264"/>
    </location>
</feature>
<feature type="splice variant" id="VSP_020459" description="In isoform 2." evidence="8">
    <location>
        <begin position="1"/>
        <end position="697"/>
    </location>
</feature>
<feature type="splice variant" id="VSP_020460" description="In isoform 2." evidence="8">
    <original>LGRDPEDYIYDLYAVCNHHGTMQGGHYT</original>
    <variation>MSQRDGVCGSHEVAGAASPGADGGLSLA</variation>
    <location>
        <begin position="698"/>
        <end position="725"/>
    </location>
</feature>
<feature type="splice variant" id="VSP_020461" description="In isoform 2." evidence="8">
    <original>PKKESSPKSQDSVSSPSPQKQKSASALTYTASSTSAKKASGPATRS</original>
    <variation>TQFPSGEPGPSRGGQGGREARAELLHGQPALPQHKHQVWFEEGQQV</variation>
    <location>
        <begin position="1095"/>
        <end position="1140"/>
    </location>
</feature>
<feature type="splice variant" id="VSP_020462" description="In isoform 2." evidence="8">
    <location>
        <begin position="1141"/>
        <end position="1352"/>
    </location>
</feature>
<feature type="sequence variant" id="VAR_027422" description="In dbSNP:rs1978066.">
    <original>D</original>
    <variation>Y</variation>
    <location>
        <position position="445"/>
    </location>
</feature>
<feature type="sequence variant" id="VAR_027423" description="In dbSNP:rs4597335.">
    <original>Q</original>
    <variation>H</variation>
    <location>
        <position position="532"/>
    </location>
</feature>
<feature type="sequence variant" id="VAR_027424" description="In dbSNP:rs13339649." evidence="4">
    <original>I</original>
    <variation>T</variation>
    <location>
        <position position="538"/>
    </location>
</feature>
<feature type="sequence variant" id="VAR_027425" description="In dbSNP:rs9932912.">
    <original>A</original>
    <variation>T</variation>
    <location>
        <position position="552"/>
    </location>
</feature>
<feature type="sequence variant" id="VAR_027426" description="In dbSNP:rs10083789.">
    <original>R</original>
    <variation>L</variation>
    <location>
        <position position="931"/>
    </location>
</feature>
<feature type="sequence variant" id="VAR_051534" description="In dbSNP:rs35541113.">
    <original>D</original>
    <variation>N</variation>
    <location>
        <position position="1269"/>
    </location>
</feature>
<feature type="sequence variant" id="VAR_051535" description="In dbSNP:rs35254998.">
    <original>R</original>
    <variation>C</variation>
    <location>
        <position position="1309"/>
    </location>
</feature>
<feature type="mutagenesis site" description="Significant increases of TRAF2 polyubiquitination levels." evidence="6">
    <original>K</original>
    <variation>A</variation>
    <location>
        <position position="1264"/>
    </location>
</feature>
<feature type="sequence conflict" description="In Ref. 1; CAE51935." evidence="9" ref="1">
    <original>L</original>
    <variation>P</variation>
    <location>
        <position position="568"/>
    </location>
</feature>
<feature type="sequence conflict" description="In Ref. 2; AK126752." evidence="9" ref="2">
    <original>Q</original>
    <variation>H</variation>
    <location>
        <position position="624"/>
    </location>
</feature>
<feature type="sequence conflict" description="In Ref. 2; AK126752." evidence="9" ref="2">
    <original>R</original>
    <variation>S</variation>
    <location>
        <position position="1082"/>
    </location>
</feature>
<comment type="function">
    <text evidence="6">Deubiquitinase that recognizes and hydrolyzes the peptide bond at the C-terminal Gly of ubiquitin. May play a role in the regulation of NF-kappa-B signaling pathway by deubiquitinating TRAF2.</text>
</comment>
<comment type="function">
    <text evidence="7">(Microbial infection) Plays a positive role in foot-and-mouth disease and classical swine fever viral infection. Mechanistically, associates with internal ribosomal entry site (IRES) element within the 5'-untranslated region of viral genomes to promote translation of the virus-encoded polyprotein.</text>
</comment>
<comment type="catalytic activity">
    <reaction evidence="6">
        <text>Thiol-dependent hydrolysis of ester, thioester, amide, peptide and isopeptide bonds formed by the C-terminal Gly of ubiquitin (a 76-residue protein attached to proteins as an intracellular targeting signal).</text>
        <dbReference type="EC" id="3.4.19.12"/>
    </reaction>
</comment>
<comment type="alternative products">
    <event type="alternative splicing"/>
    <isoform>
        <id>Q70CQ4-1</id>
        <name>1</name>
        <sequence type="displayed"/>
    </isoform>
    <isoform>
        <id>Q70CQ4-2</id>
        <name>2</name>
        <sequence type="described" ref="VSP_020459 VSP_020460 VSP_020461 VSP_020462"/>
    </isoform>
</comment>
<comment type="tissue specificity">
    <text evidence="5">Widely expressed.</text>
</comment>
<comment type="PTM">
    <text evidence="6">Acetylated at Lys-1264. Acetylation decreases activity. Deacetylated by SIRT1.</text>
</comment>
<comment type="similarity">
    <text evidence="9">Belongs to the peptidase C19 family.</text>
</comment>
<comment type="sequence caution" evidence="9">
    <conflict type="frameshift">
        <sequence resource="EMBL" id="AK126752"/>
    </conflict>
</comment>
<gene>
    <name type="primary">USP31</name>
    <name type="synonym">KIAA1203</name>
</gene>
<dbReference type="EC" id="3.4.19.12" evidence="6"/>
<dbReference type="EMBL" id="AJ586135">
    <property type="protein sequence ID" value="CAE51935.2"/>
    <property type="molecule type" value="mRNA"/>
</dbReference>
<dbReference type="EMBL" id="AK126447">
    <property type="protein sequence ID" value="BAC86554.1"/>
    <property type="molecule type" value="mRNA"/>
</dbReference>
<dbReference type="EMBL" id="AK126752">
    <property type="status" value="NOT_ANNOTATED_CDS"/>
    <property type="molecule type" value="mRNA"/>
</dbReference>
<dbReference type="EMBL" id="AB033029">
    <property type="protein sequence ID" value="BAA86517.1"/>
    <property type="molecule type" value="mRNA"/>
</dbReference>
<dbReference type="EMBL" id="BX648357">
    <property type="protein sequence ID" value="CAH10383.1"/>
    <property type="molecule type" value="mRNA"/>
</dbReference>
<dbReference type="CCDS" id="CCDS10607.1">
    <molecule id="Q70CQ4-1"/>
</dbReference>
<dbReference type="RefSeq" id="NP_065769.3">
    <molecule id="Q70CQ4-1"/>
    <property type="nucleotide sequence ID" value="NM_020718.3"/>
</dbReference>
<dbReference type="SMR" id="Q70CQ4"/>
<dbReference type="BioGRID" id="121548">
    <property type="interactions" value="28"/>
</dbReference>
<dbReference type="FunCoup" id="Q70CQ4">
    <property type="interactions" value="1850"/>
</dbReference>
<dbReference type="IntAct" id="Q70CQ4">
    <property type="interactions" value="9"/>
</dbReference>
<dbReference type="MINT" id="Q70CQ4"/>
<dbReference type="STRING" id="9606.ENSP00000219689"/>
<dbReference type="MEROPS" id="C19.071"/>
<dbReference type="GlyGen" id="Q70CQ4">
    <property type="glycosylation" value="3 sites, 1 O-linked glycan (2 sites)"/>
</dbReference>
<dbReference type="iPTMnet" id="Q70CQ4"/>
<dbReference type="PhosphoSitePlus" id="Q70CQ4"/>
<dbReference type="SwissPalm" id="Q70CQ4"/>
<dbReference type="BioMuta" id="USP31"/>
<dbReference type="DMDM" id="134047944"/>
<dbReference type="jPOST" id="Q70CQ4"/>
<dbReference type="MassIVE" id="Q70CQ4"/>
<dbReference type="PaxDb" id="9606-ENSP00000219689"/>
<dbReference type="PeptideAtlas" id="Q70CQ4"/>
<dbReference type="ProteomicsDB" id="68525">
    <molecule id="Q70CQ4-1"/>
</dbReference>
<dbReference type="ProteomicsDB" id="68526">
    <molecule id="Q70CQ4-2"/>
</dbReference>
<dbReference type="Pumba" id="Q70CQ4"/>
<dbReference type="TopDownProteomics" id="Q70CQ4-2">
    <molecule id="Q70CQ4-2"/>
</dbReference>
<dbReference type="Antibodypedia" id="1717">
    <property type="antibodies" value="64 antibodies from 23 providers"/>
</dbReference>
<dbReference type="DNASU" id="57478"/>
<dbReference type="Ensembl" id="ENST00000219689.12">
    <molecule id="Q70CQ4-1"/>
    <property type="protein sequence ID" value="ENSP00000219689.7"/>
    <property type="gene ID" value="ENSG00000103404.15"/>
</dbReference>
<dbReference type="GeneID" id="57478"/>
<dbReference type="KEGG" id="hsa:57478"/>
<dbReference type="MANE-Select" id="ENST00000219689.12">
    <property type="protein sequence ID" value="ENSP00000219689.7"/>
    <property type="RefSeq nucleotide sequence ID" value="NM_020718.4"/>
    <property type="RefSeq protein sequence ID" value="NP_065769.3"/>
</dbReference>
<dbReference type="UCSC" id="uc002dll.4">
    <molecule id="Q70CQ4-1"/>
    <property type="organism name" value="human"/>
</dbReference>
<dbReference type="AGR" id="HGNC:20060"/>
<dbReference type="CTD" id="57478"/>
<dbReference type="DisGeNET" id="57478"/>
<dbReference type="GeneCards" id="USP31"/>
<dbReference type="HGNC" id="HGNC:20060">
    <property type="gene designation" value="USP31"/>
</dbReference>
<dbReference type="HPA" id="ENSG00000103404">
    <property type="expression patterns" value="Low tissue specificity"/>
</dbReference>
<dbReference type="MIM" id="619536">
    <property type="type" value="gene"/>
</dbReference>
<dbReference type="neXtProt" id="NX_Q70CQ4"/>
<dbReference type="OpenTargets" id="ENSG00000103404"/>
<dbReference type="PharmGKB" id="PA164742780"/>
<dbReference type="VEuPathDB" id="HostDB:ENSG00000103404"/>
<dbReference type="eggNOG" id="KOG1870">
    <property type="taxonomic scope" value="Eukaryota"/>
</dbReference>
<dbReference type="GeneTree" id="ENSGT00940000156355"/>
<dbReference type="HOGENOM" id="CLU_001060_4_0_1"/>
<dbReference type="InParanoid" id="Q70CQ4"/>
<dbReference type="OrthoDB" id="292964at2759"/>
<dbReference type="PAN-GO" id="Q70CQ4">
    <property type="GO annotations" value="0 GO annotations based on evolutionary models"/>
</dbReference>
<dbReference type="PhylomeDB" id="Q70CQ4"/>
<dbReference type="TreeFam" id="TF106278"/>
<dbReference type="PathwayCommons" id="Q70CQ4"/>
<dbReference type="SignaLink" id="Q70CQ4"/>
<dbReference type="BioGRID-ORCS" id="57478">
    <property type="hits" value="20 hits in 1196 CRISPR screens"/>
</dbReference>
<dbReference type="ChiTaRS" id="USP31">
    <property type="organism name" value="human"/>
</dbReference>
<dbReference type="GenomeRNAi" id="57478"/>
<dbReference type="Pharos" id="Q70CQ4">
    <property type="development level" value="Tbio"/>
</dbReference>
<dbReference type="PRO" id="PR:Q70CQ4"/>
<dbReference type="Proteomes" id="UP000005640">
    <property type="component" value="Chromosome 16"/>
</dbReference>
<dbReference type="RNAct" id="Q70CQ4">
    <property type="molecule type" value="protein"/>
</dbReference>
<dbReference type="Bgee" id="ENSG00000103404">
    <property type="expression patterns" value="Expressed in inferior vagus X ganglion and 183 other cell types or tissues"/>
</dbReference>
<dbReference type="ExpressionAtlas" id="Q70CQ4">
    <property type="expression patterns" value="baseline and differential"/>
</dbReference>
<dbReference type="GO" id="GO:0005634">
    <property type="term" value="C:nucleus"/>
    <property type="evidence" value="ECO:0000314"/>
    <property type="project" value="FlyBase"/>
</dbReference>
<dbReference type="GO" id="GO:0004843">
    <property type="term" value="F:cysteine-type deubiquitinase activity"/>
    <property type="evidence" value="ECO:0000314"/>
    <property type="project" value="FlyBase"/>
</dbReference>
<dbReference type="GO" id="GO:0016579">
    <property type="term" value="P:protein deubiquitination"/>
    <property type="evidence" value="ECO:0007669"/>
    <property type="project" value="InterPro"/>
</dbReference>
<dbReference type="GO" id="GO:0006508">
    <property type="term" value="P:proteolysis"/>
    <property type="evidence" value="ECO:0007669"/>
    <property type="project" value="UniProtKB-KW"/>
</dbReference>
<dbReference type="CDD" id="cd02674">
    <property type="entry name" value="Peptidase_C19R"/>
    <property type="match status" value="1"/>
</dbReference>
<dbReference type="FunFam" id="3.90.70.10:FF:000048">
    <property type="entry name" value="Ubiquitin carboxyl-terminal hydrolase 31"/>
    <property type="match status" value="1"/>
</dbReference>
<dbReference type="FunFam" id="3.90.70.10:FF:000046">
    <property type="entry name" value="ubiquitin carboxyl-terminal hydrolase 31"/>
    <property type="match status" value="1"/>
</dbReference>
<dbReference type="Gene3D" id="3.90.70.10">
    <property type="entry name" value="Cysteine proteinases"/>
    <property type="match status" value="2"/>
</dbReference>
<dbReference type="InterPro" id="IPR038765">
    <property type="entry name" value="Papain-like_cys_pep_sf"/>
</dbReference>
<dbReference type="InterPro" id="IPR001394">
    <property type="entry name" value="Peptidase_C19_UCH"/>
</dbReference>
<dbReference type="InterPro" id="IPR050185">
    <property type="entry name" value="Ub_carboxyl-term_hydrolase"/>
</dbReference>
<dbReference type="InterPro" id="IPR018200">
    <property type="entry name" value="USP_CS"/>
</dbReference>
<dbReference type="InterPro" id="IPR028889">
    <property type="entry name" value="USP_dom"/>
</dbReference>
<dbReference type="PANTHER" id="PTHR21646">
    <property type="entry name" value="UBIQUITIN CARBOXYL-TERMINAL HYDROLASE"/>
    <property type="match status" value="1"/>
</dbReference>
<dbReference type="PANTHER" id="PTHR21646:SF44">
    <property type="entry name" value="UBIQUITIN CARBOXYL-TERMINAL HYDROLASE 31"/>
    <property type="match status" value="1"/>
</dbReference>
<dbReference type="Pfam" id="PF00443">
    <property type="entry name" value="UCH"/>
    <property type="match status" value="1"/>
</dbReference>
<dbReference type="SUPFAM" id="SSF54001">
    <property type="entry name" value="Cysteine proteinases"/>
    <property type="match status" value="1"/>
</dbReference>
<dbReference type="PROSITE" id="PS00972">
    <property type="entry name" value="USP_1"/>
    <property type="match status" value="1"/>
</dbReference>
<dbReference type="PROSITE" id="PS00973">
    <property type="entry name" value="USP_2"/>
    <property type="match status" value="1"/>
</dbReference>
<dbReference type="PROSITE" id="PS50235">
    <property type="entry name" value="USP_3"/>
    <property type="match status" value="1"/>
</dbReference>